<name>RF1_ALLAM</name>
<organism>
    <name type="scientific">Allorhizobium ampelinum (strain ATCC BAA-846 / DSM 112012 / S4)</name>
    <name type="common">Agrobacterium vitis (strain S4)</name>
    <dbReference type="NCBI Taxonomy" id="311402"/>
    <lineage>
        <taxon>Bacteria</taxon>
        <taxon>Pseudomonadati</taxon>
        <taxon>Pseudomonadota</taxon>
        <taxon>Alphaproteobacteria</taxon>
        <taxon>Hyphomicrobiales</taxon>
        <taxon>Rhizobiaceae</taxon>
        <taxon>Rhizobium/Agrobacterium group</taxon>
        <taxon>Allorhizobium</taxon>
        <taxon>Allorhizobium ampelinum</taxon>
    </lineage>
</organism>
<evidence type="ECO:0000255" key="1">
    <source>
        <dbReference type="HAMAP-Rule" id="MF_00093"/>
    </source>
</evidence>
<evidence type="ECO:0000256" key="2">
    <source>
        <dbReference type="SAM" id="MobiDB-lite"/>
    </source>
</evidence>
<dbReference type="EMBL" id="CP000633">
    <property type="protein sequence ID" value="ACM37856.1"/>
    <property type="molecule type" value="Genomic_DNA"/>
</dbReference>
<dbReference type="RefSeq" id="WP_015917268.1">
    <property type="nucleotide sequence ID" value="NC_011989.1"/>
</dbReference>
<dbReference type="SMR" id="B9JT13"/>
<dbReference type="STRING" id="311402.Avi_3955"/>
<dbReference type="KEGG" id="avi:Avi_3955"/>
<dbReference type="eggNOG" id="COG0216">
    <property type="taxonomic scope" value="Bacteria"/>
</dbReference>
<dbReference type="HOGENOM" id="CLU_036856_0_1_5"/>
<dbReference type="Proteomes" id="UP000001596">
    <property type="component" value="Chromosome 1"/>
</dbReference>
<dbReference type="GO" id="GO:0005737">
    <property type="term" value="C:cytoplasm"/>
    <property type="evidence" value="ECO:0007669"/>
    <property type="project" value="UniProtKB-SubCell"/>
</dbReference>
<dbReference type="GO" id="GO:0016149">
    <property type="term" value="F:translation release factor activity, codon specific"/>
    <property type="evidence" value="ECO:0007669"/>
    <property type="project" value="UniProtKB-UniRule"/>
</dbReference>
<dbReference type="FunFam" id="3.30.160.20:FF:000004">
    <property type="entry name" value="Peptide chain release factor 1"/>
    <property type="match status" value="1"/>
</dbReference>
<dbReference type="FunFam" id="3.30.70.1660:FF:000002">
    <property type="entry name" value="Peptide chain release factor 1"/>
    <property type="match status" value="1"/>
</dbReference>
<dbReference type="FunFam" id="3.30.70.1660:FF:000004">
    <property type="entry name" value="Peptide chain release factor 1"/>
    <property type="match status" value="1"/>
</dbReference>
<dbReference type="Gene3D" id="3.30.160.20">
    <property type="match status" value="1"/>
</dbReference>
<dbReference type="Gene3D" id="3.30.70.1660">
    <property type="match status" value="2"/>
</dbReference>
<dbReference type="Gene3D" id="6.10.140.1950">
    <property type="match status" value="1"/>
</dbReference>
<dbReference type="HAMAP" id="MF_00093">
    <property type="entry name" value="Rel_fac_1"/>
    <property type="match status" value="1"/>
</dbReference>
<dbReference type="InterPro" id="IPR005139">
    <property type="entry name" value="PCRF"/>
</dbReference>
<dbReference type="InterPro" id="IPR000352">
    <property type="entry name" value="Pep_chain_release_fac_I"/>
</dbReference>
<dbReference type="InterPro" id="IPR045853">
    <property type="entry name" value="Pep_chain_release_fac_I_sf"/>
</dbReference>
<dbReference type="InterPro" id="IPR050057">
    <property type="entry name" value="Prokaryotic/Mito_RF"/>
</dbReference>
<dbReference type="InterPro" id="IPR004373">
    <property type="entry name" value="RF-1"/>
</dbReference>
<dbReference type="NCBIfam" id="TIGR00019">
    <property type="entry name" value="prfA"/>
    <property type="match status" value="1"/>
</dbReference>
<dbReference type="NCBIfam" id="NF001859">
    <property type="entry name" value="PRK00591.1"/>
    <property type="match status" value="1"/>
</dbReference>
<dbReference type="PANTHER" id="PTHR43804">
    <property type="entry name" value="LD18447P"/>
    <property type="match status" value="1"/>
</dbReference>
<dbReference type="PANTHER" id="PTHR43804:SF7">
    <property type="entry name" value="LD18447P"/>
    <property type="match status" value="1"/>
</dbReference>
<dbReference type="Pfam" id="PF03462">
    <property type="entry name" value="PCRF"/>
    <property type="match status" value="1"/>
</dbReference>
<dbReference type="Pfam" id="PF00472">
    <property type="entry name" value="RF-1"/>
    <property type="match status" value="1"/>
</dbReference>
<dbReference type="SMART" id="SM00937">
    <property type="entry name" value="PCRF"/>
    <property type="match status" value="1"/>
</dbReference>
<dbReference type="SUPFAM" id="SSF75620">
    <property type="entry name" value="Release factor"/>
    <property type="match status" value="1"/>
</dbReference>
<dbReference type="PROSITE" id="PS00745">
    <property type="entry name" value="RF_PROK_I"/>
    <property type="match status" value="1"/>
</dbReference>
<protein>
    <recommendedName>
        <fullName evidence="1">Peptide chain release factor 1</fullName>
        <shortName evidence="1">RF-1</shortName>
    </recommendedName>
</protein>
<proteinExistence type="inferred from homology"/>
<gene>
    <name evidence="1" type="primary">prfA</name>
    <name type="ordered locus">Avi_3955</name>
</gene>
<accession>B9JT13</accession>
<comment type="function">
    <text evidence="1">Peptide chain release factor 1 directs the termination of translation in response to the peptide chain termination codons UAG and UAA.</text>
</comment>
<comment type="subcellular location">
    <subcellularLocation>
        <location evidence="1">Cytoplasm</location>
    </subcellularLocation>
</comment>
<comment type="PTM">
    <text evidence="1">Methylated by PrmC. Methylation increases the termination efficiency of RF1.</text>
</comment>
<comment type="similarity">
    <text evidence="1">Belongs to the prokaryotic/mitochondrial release factor family.</text>
</comment>
<sequence length="359" mass="39688">MAKLPVDKMRELERRFGEIEARMSAGPAADVYVKLASEYSELQPVVKAIRELGLAEKEVADLKALLADKSTDREMRDLAEMELPDVEARLEGLEKEIQIQLLPKDAADEKSAILEIRAGTGGSEAALFAGDLFRMYERFAAGKGWKVEVLSSSEGDAGGFKEIIATVTGRGVFSKLKFESGVHRVQRVPDTETQGRIHTSAATVAVLPEAEEIDIEVRAEDIRIDTMRSSGAGGQHVNTTDSAVRITHLPTGLVVTSSEKSQHQNRAKAMQVLRSRLFDMERQRADSERSADRKSQVGSGDRSERIRTYNFPQGRVTDHRINLTLYKLDRMMMGEIDEVVDALIADYQAGQLAQLGEQA</sequence>
<keyword id="KW-0963">Cytoplasm</keyword>
<keyword id="KW-0488">Methylation</keyword>
<keyword id="KW-0648">Protein biosynthesis</keyword>
<keyword id="KW-1185">Reference proteome</keyword>
<feature type="chain" id="PRO_1000193464" description="Peptide chain release factor 1">
    <location>
        <begin position="1"/>
        <end position="359"/>
    </location>
</feature>
<feature type="region of interest" description="Disordered" evidence="2">
    <location>
        <begin position="282"/>
        <end position="309"/>
    </location>
</feature>
<feature type="compositionally biased region" description="Basic and acidic residues" evidence="2">
    <location>
        <begin position="282"/>
        <end position="307"/>
    </location>
</feature>
<feature type="modified residue" description="N5-methylglutamine" evidence="1">
    <location>
        <position position="235"/>
    </location>
</feature>
<reference key="1">
    <citation type="journal article" date="2009" name="J. Bacteriol.">
        <title>Genome sequences of three Agrobacterium biovars help elucidate the evolution of multichromosome genomes in bacteria.</title>
        <authorList>
            <person name="Slater S.C."/>
            <person name="Goldman B.S."/>
            <person name="Goodner B."/>
            <person name="Setubal J.C."/>
            <person name="Farrand S.K."/>
            <person name="Nester E.W."/>
            <person name="Burr T.J."/>
            <person name="Banta L."/>
            <person name="Dickerman A.W."/>
            <person name="Paulsen I."/>
            <person name="Otten L."/>
            <person name="Suen G."/>
            <person name="Welch R."/>
            <person name="Almeida N.F."/>
            <person name="Arnold F."/>
            <person name="Burton O.T."/>
            <person name="Du Z."/>
            <person name="Ewing A."/>
            <person name="Godsy E."/>
            <person name="Heisel S."/>
            <person name="Houmiel K.L."/>
            <person name="Jhaveri J."/>
            <person name="Lu J."/>
            <person name="Miller N.M."/>
            <person name="Norton S."/>
            <person name="Chen Q."/>
            <person name="Phoolcharoen W."/>
            <person name="Ohlin V."/>
            <person name="Ondrusek D."/>
            <person name="Pride N."/>
            <person name="Stricklin S.L."/>
            <person name="Sun J."/>
            <person name="Wheeler C."/>
            <person name="Wilson L."/>
            <person name="Zhu H."/>
            <person name="Wood D.W."/>
        </authorList>
    </citation>
    <scope>NUCLEOTIDE SEQUENCE [LARGE SCALE GENOMIC DNA]</scope>
    <source>
        <strain>ATCC BAA-846 / DSM 112012 / S4</strain>
    </source>
</reference>